<reference key="1">
    <citation type="journal article" date="2000" name="Anticancer Res.">
        <title>Identification of THW, a putative new tumor suppressor gene.</title>
        <authorList>
            <person name="Hildebrandt T."/>
            <person name="Preiherr J."/>
            <person name="Tarbe N."/>
            <person name="Klostermann S."/>
            <person name="van Muijen G.N.P."/>
            <person name="Weidle U."/>
        </authorList>
    </citation>
    <scope>NUCLEOTIDE SEQUENCE [MRNA]</scope>
</reference>
<reference key="2">
    <citation type="journal article" date="2003" name="Br. J. Dermatol.">
        <title>Identification of novel genes for secreted and membrane-anchored proteins in human keratinocytes.</title>
        <authorList>
            <person name="Bonkobara M."/>
            <person name="Das A."/>
            <person name="Takao J."/>
            <person name="Cruz P.D. Jr."/>
            <person name="Ariizumi K."/>
        </authorList>
    </citation>
    <scope>NUCLEOTIDE SEQUENCE [MRNA]</scope>
    <scope>TISSUE SPECIFICITY</scope>
    <scope>VARIANT ARG-143</scope>
    <source>
        <tissue>Keratinocyte</tissue>
    </source>
</reference>
<reference key="3">
    <citation type="submission" date="2000-10" db="EMBL/GenBank/DDBJ databases">
        <title>p53 regulates the expression of a novel four transmembrane protein -- PERP/PIGPC1 in mouse and human prostate cancer.</title>
        <authorList>
            <person name="Goltsov A.A."/>
            <person name="Ren C."/>
            <person name="Wang J."/>
            <person name="Yang G."/>
            <person name="Tahir S."/>
            <person name="Li L."/>
            <person name="Timme T.L."/>
            <person name="Thompson T.C."/>
        </authorList>
    </citation>
    <scope>NUCLEOTIDE SEQUENCE [MRNA]</scope>
    <scope>VARIANT LEU-174</scope>
    <source>
        <tissue>Prostatic carcinoma</tissue>
    </source>
</reference>
<reference key="4">
    <citation type="journal article" date="2004" name="Nat. Genet.">
        <title>Complete sequencing and characterization of 21,243 full-length human cDNAs.</title>
        <authorList>
            <person name="Ota T."/>
            <person name="Suzuki Y."/>
            <person name="Nishikawa T."/>
            <person name="Otsuki T."/>
            <person name="Sugiyama T."/>
            <person name="Irie R."/>
            <person name="Wakamatsu A."/>
            <person name="Hayashi K."/>
            <person name="Sato H."/>
            <person name="Nagai K."/>
            <person name="Kimura K."/>
            <person name="Makita H."/>
            <person name="Sekine M."/>
            <person name="Obayashi M."/>
            <person name="Nishi T."/>
            <person name="Shibahara T."/>
            <person name="Tanaka T."/>
            <person name="Ishii S."/>
            <person name="Yamamoto J."/>
            <person name="Saito K."/>
            <person name="Kawai Y."/>
            <person name="Isono Y."/>
            <person name="Nakamura Y."/>
            <person name="Nagahari K."/>
            <person name="Murakami K."/>
            <person name="Yasuda T."/>
            <person name="Iwayanagi T."/>
            <person name="Wagatsuma M."/>
            <person name="Shiratori A."/>
            <person name="Sudo H."/>
            <person name="Hosoiri T."/>
            <person name="Kaku Y."/>
            <person name="Kodaira H."/>
            <person name="Kondo H."/>
            <person name="Sugawara M."/>
            <person name="Takahashi M."/>
            <person name="Kanda K."/>
            <person name="Yokoi T."/>
            <person name="Furuya T."/>
            <person name="Kikkawa E."/>
            <person name="Omura Y."/>
            <person name="Abe K."/>
            <person name="Kamihara K."/>
            <person name="Katsuta N."/>
            <person name="Sato K."/>
            <person name="Tanikawa M."/>
            <person name="Yamazaki M."/>
            <person name="Ninomiya K."/>
            <person name="Ishibashi T."/>
            <person name="Yamashita H."/>
            <person name="Murakawa K."/>
            <person name="Fujimori K."/>
            <person name="Tanai H."/>
            <person name="Kimata M."/>
            <person name="Watanabe M."/>
            <person name="Hiraoka S."/>
            <person name="Chiba Y."/>
            <person name="Ishida S."/>
            <person name="Ono Y."/>
            <person name="Takiguchi S."/>
            <person name="Watanabe S."/>
            <person name="Yosida M."/>
            <person name="Hotuta T."/>
            <person name="Kusano J."/>
            <person name="Kanehori K."/>
            <person name="Takahashi-Fujii A."/>
            <person name="Hara H."/>
            <person name="Tanase T.-O."/>
            <person name="Nomura Y."/>
            <person name="Togiya S."/>
            <person name="Komai F."/>
            <person name="Hara R."/>
            <person name="Takeuchi K."/>
            <person name="Arita M."/>
            <person name="Imose N."/>
            <person name="Musashino K."/>
            <person name="Yuuki H."/>
            <person name="Oshima A."/>
            <person name="Sasaki N."/>
            <person name="Aotsuka S."/>
            <person name="Yoshikawa Y."/>
            <person name="Matsunawa H."/>
            <person name="Ichihara T."/>
            <person name="Shiohata N."/>
            <person name="Sano S."/>
            <person name="Moriya S."/>
            <person name="Momiyama H."/>
            <person name="Satoh N."/>
            <person name="Takami S."/>
            <person name="Terashima Y."/>
            <person name="Suzuki O."/>
            <person name="Nakagawa S."/>
            <person name="Senoh A."/>
            <person name="Mizoguchi H."/>
            <person name="Goto Y."/>
            <person name="Shimizu F."/>
            <person name="Wakebe H."/>
            <person name="Hishigaki H."/>
            <person name="Watanabe T."/>
            <person name="Sugiyama A."/>
            <person name="Takemoto M."/>
            <person name="Kawakami B."/>
            <person name="Yamazaki M."/>
            <person name="Watanabe K."/>
            <person name="Kumagai A."/>
            <person name="Itakura S."/>
            <person name="Fukuzumi Y."/>
            <person name="Fujimori Y."/>
            <person name="Komiyama M."/>
            <person name="Tashiro H."/>
            <person name="Tanigami A."/>
            <person name="Fujiwara T."/>
            <person name="Ono T."/>
            <person name="Yamada K."/>
            <person name="Fujii Y."/>
            <person name="Ozaki K."/>
            <person name="Hirao M."/>
            <person name="Ohmori Y."/>
            <person name="Kawabata A."/>
            <person name="Hikiji T."/>
            <person name="Kobatake N."/>
            <person name="Inagaki H."/>
            <person name="Ikema Y."/>
            <person name="Okamoto S."/>
            <person name="Okitani R."/>
            <person name="Kawakami T."/>
            <person name="Noguchi S."/>
            <person name="Itoh T."/>
            <person name="Shigeta K."/>
            <person name="Senba T."/>
            <person name="Matsumura K."/>
            <person name="Nakajima Y."/>
            <person name="Mizuno T."/>
            <person name="Morinaga M."/>
            <person name="Sasaki M."/>
            <person name="Togashi T."/>
            <person name="Oyama M."/>
            <person name="Hata H."/>
            <person name="Watanabe M."/>
            <person name="Komatsu T."/>
            <person name="Mizushima-Sugano J."/>
            <person name="Satoh T."/>
            <person name="Shirai Y."/>
            <person name="Takahashi Y."/>
            <person name="Nakagawa K."/>
            <person name="Okumura K."/>
            <person name="Nagase T."/>
            <person name="Nomura N."/>
            <person name="Kikuchi H."/>
            <person name="Masuho Y."/>
            <person name="Yamashita R."/>
            <person name="Nakai K."/>
            <person name="Yada T."/>
            <person name="Nakamura Y."/>
            <person name="Ohara O."/>
            <person name="Isogai T."/>
            <person name="Sugano S."/>
        </authorList>
    </citation>
    <scope>NUCLEOTIDE SEQUENCE [LARGE SCALE MRNA]</scope>
    <scope>VARIANT LEU-174</scope>
    <source>
        <tissue>Thymus</tissue>
        <tissue>Tongue</tissue>
    </source>
</reference>
<reference key="5">
    <citation type="journal article" date="2005" name="DNA Res.">
        <title>Signal sequence and keyword trap in silico for selection of full-length human cDNAs encoding secretion or membrane proteins from oligo-capped cDNA libraries.</title>
        <authorList>
            <person name="Otsuki T."/>
            <person name="Ota T."/>
            <person name="Nishikawa T."/>
            <person name="Hayashi K."/>
            <person name="Suzuki Y."/>
            <person name="Yamamoto J."/>
            <person name="Wakamatsu A."/>
            <person name="Kimura K."/>
            <person name="Sakamoto K."/>
            <person name="Hatano N."/>
            <person name="Kawai Y."/>
            <person name="Ishii S."/>
            <person name="Saito K."/>
            <person name="Kojima S."/>
            <person name="Sugiyama T."/>
            <person name="Ono T."/>
            <person name="Okano K."/>
            <person name="Yoshikawa Y."/>
            <person name="Aotsuka S."/>
            <person name="Sasaki N."/>
            <person name="Hattori A."/>
            <person name="Okumura K."/>
            <person name="Nagai K."/>
            <person name="Sugano S."/>
            <person name="Isogai T."/>
        </authorList>
    </citation>
    <scope>NUCLEOTIDE SEQUENCE [LARGE SCALE MRNA]</scope>
    <scope>VARIANT ARG-143</scope>
    <source>
        <tissue>Embryo</tissue>
        <tissue>Placenta</tissue>
    </source>
</reference>
<reference key="6">
    <citation type="journal article" date="2003" name="Nature">
        <title>The DNA sequence and analysis of human chromosome 6.</title>
        <authorList>
            <person name="Mungall A.J."/>
            <person name="Palmer S.A."/>
            <person name="Sims S.K."/>
            <person name="Edwards C.A."/>
            <person name="Ashurst J.L."/>
            <person name="Wilming L."/>
            <person name="Jones M.C."/>
            <person name="Horton R."/>
            <person name="Hunt S.E."/>
            <person name="Scott C.E."/>
            <person name="Gilbert J.G.R."/>
            <person name="Clamp M.E."/>
            <person name="Bethel G."/>
            <person name="Milne S."/>
            <person name="Ainscough R."/>
            <person name="Almeida J.P."/>
            <person name="Ambrose K.D."/>
            <person name="Andrews T.D."/>
            <person name="Ashwell R.I.S."/>
            <person name="Babbage A.K."/>
            <person name="Bagguley C.L."/>
            <person name="Bailey J."/>
            <person name="Banerjee R."/>
            <person name="Barker D.J."/>
            <person name="Barlow K.F."/>
            <person name="Bates K."/>
            <person name="Beare D.M."/>
            <person name="Beasley H."/>
            <person name="Beasley O."/>
            <person name="Bird C.P."/>
            <person name="Blakey S.E."/>
            <person name="Bray-Allen S."/>
            <person name="Brook J."/>
            <person name="Brown A.J."/>
            <person name="Brown J.Y."/>
            <person name="Burford D.C."/>
            <person name="Burrill W."/>
            <person name="Burton J."/>
            <person name="Carder C."/>
            <person name="Carter N.P."/>
            <person name="Chapman J.C."/>
            <person name="Clark S.Y."/>
            <person name="Clark G."/>
            <person name="Clee C.M."/>
            <person name="Clegg S."/>
            <person name="Cobley V."/>
            <person name="Collier R.E."/>
            <person name="Collins J.E."/>
            <person name="Colman L.K."/>
            <person name="Corby N.R."/>
            <person name="Coville G.J."/>
            <person name="Culley K.M."/>
            <person name="Dhami P."/>
            <person name="Davies J."/>
            <person name="Dunn M."/>
            <person name="Earthrowl M.E."/>
            <person name="Ellington A.E."/>
            <person name="Evans K.A."/>
            <person name="Faulkner L."/>
            <person name="Francis M.D."/>
            <person name="Frankish A."/>
            <person name="Frankland J."/>
            <person name="French L."/>
            <person name="Garner P."/>
            <person name="Garnett J."/>
            <person name="Ghori M.J."/>
            <person name="Gilby L.M."/>
            <person name="Gillson C.J."/>
            <person name="Glithero R.J."/>
            <person name="Grafham D.V."/>
            <person name="Grant M."/>
            <person name="Gribble S."/>
            <person name="Griffiths C."/>
            <person name="Griffiths M.N.D."/>
            <person name="Hall R."/>
            <person name="Halls K.S."/>
            <person name="Hammond S."/>
            <person name="Harley J.L."/>
            <person name="Hart E.A."/>
            <person name="Heath P.D."/>
            <person name="Heathcott R."/>
            <person name="Holmes S.J."/>
            <person name="Howden P.J."/>
            <person name="Howe K.L."/>
            <person name="Howell G.R."/>
            <person name="Huckle E."/>
            <person name="Humphray S.J."/>
            <person name="Humphries M.D."/>
            <person name="Hunt A.R."/>
            <person name="Johnson C.M."/>
            <person name="Joy A.A."/>
            <person name="Kay M."/>
            <person name="Keenan S.J."/>
            <person name="Kimberley A.M."/>
            <person name="King A."/>
            <person name="Laird G.K."/>
            <person name="Langford C."/>
            <person name="Lawlor S."/>
            <person name="Leongamornlert D.A."/>
            <person name="Leversha M."/>
            <person name="Lloyd C.R."/>
            <person name="Lloyd D.M."/>
            <person name="Loveland J.E."/>
            <person name="Lovell J."/>
            <person name="Martin S."/>
            <person name="Mashreghi-Mohammadi M."/>
            <person name="Maslen G.L."/>
            <person name="Matthews L."/>
            <person name="McCann O.T."/>
            <person name="McLaren S.J."/>
            <person name="McLay K."/>
            <person name="McMurray A."/>
            <person name="Moore M.J.F."/>
            <person name="Mullikin J.C."/>
            <person name="Niblett D."/>
            <person name="Nickerson T."/>
            <person name="Novik K.L."/>
            <person name="Oliver K."/>
            <person name="Overton-Larty E.K."/>
            <person name="Parker A."/>
            <person name="Patel R."/>
            <person name="Pearce A.V."/>
            <person name="Peck A.I."/>
            <person name="Phillimore B.J.C.T."/>
            <person name="Phillips S."/>
            <person name="Plumb R.W."/>
            <person name="Porter K.M."/>
            <person name="Ramsey Y."/>
            <person name="Ranby S.A."/>
            <person name="Rice C.M."/>
            <person name="Ross M.T."/>
            <person name="Searle S.M."/>
            <person name="Sehra H.K."/>
            <person name="Sheridan E."/>
            <person name="Skuce C.D."/>
            <person name="Smith S."/>
            <person name="Smith M."/>
            <person name="Spraggon L."/>
            <person name="Squares S.L."/>
            <person name="Steward C.A."/>
            <person name="Sycamore N."/>
            <person name="Tamlyn-Hall G."/>
            <person name="Tester J."/>
            <person name="Theaker A.J."/>
            <person name="Thomas D.W."/>
            <person name="Thorpe A."/>
            <person name="Tracey A."/>
            <person name="Tromans A."/>
            <person name="Tubby B."/>
            <person name="Wall M."/>
            <person name="Wallis J.M."/>
            <person name="West A.P."/>
            <person name="White S.S."/>
            <person name="Whitehead S.L."/>
            <person name="Whittaker H."/>
            <person name="Wild A."/>
            <person name="Willey D.J."/>
            <person name="Wilmer T.E."/>
            <person name="Wood J.M."/>
            <person name="Wray P.W."/>
            <person name="Wyatt J.C."/>
            <person name="Young L."/>
            <person name="Younger R.M."/>
            <person name="Bentley D.R."/>
            <person name="Coulson A."/>
            <person name="Durbin R.M."/>
            <person name="Hubbard T."/>
            <person name="Sulston J.E."/>
            <person name="Dunham I."/>
            <person name="Rogers J."/>
            <person name="Beck S."/>
        </authorList>
    </citation>
    <scope>NUCLEOTIDE SEQUENCE [LARGE SCALE GENOMIC DNA]</scope>
</reference>
<reference key="7">
    <citation type="submission" date="2005-09" db="EMBL/GenBank/DDBJ databases">
        <authorList>
            <person name="Mural R.J."/>
            <person name="Istrail S."/>
            <person name="Sutton G.G."/>
            <person name="Florea L."/>
            <person name="Halpern A.L."/>
            <person name="Mobarry C.M."/>
            <person name="Lippert R."/>
            <person name="Walenz B."/>
            <person name="Shatkay H."/>
            <person name="Dew I."/>
            <person name="Miller J.R."/>
            <person name="Flanigan M.J."/>
            <person name="Edwards N.J."/>
            <person name="Bolanos R."/>
            <person name="Fasulo D."/>
            <person name="Halldorsson B.V."/>
            <person name="Hannenhalli S."/>
            <person name="Turner R."/>
            <person name="Yooseph S."/>
            <person name="Lu F."/>
            <person name="Nusskern D.R."/>
            <person name="Shue B.C."/>
            <person name="Zheng X.H."/>
            <person name="Zhong F."/>
            <person name="Delcher A.L."/>
            <person name="Huson D.H."/>
            <person name="Kravitz S.A."/>
            <person name="Mouchard L."/>
            <person name="Reinert K."/>
            <person name="Remington K.A."/>
            <person name="Clark A.G."/>
            <person name="Waterman M.S."/>
            <person name="Eichler E.E."/>
            <person name="Adams M.D."/>
            <person name="Hunkapiller M.W."/>
            <person name="Myers E.W."/>
            <person name="Venter J.C."/>
        </authorList>
    </citation>
    <scope>NUCLEOTIDE SEQUENCE [LARGE SCALE GENOMIC DNA]</scope>
</reference>
<reference key="8">
    <citation type="journal article" date="2004" name="Genome Res.">
        <title>The status, quality, and expansion of the NIH full-length cDNA project: the Mammalian Gene Collection (MGC).</title>
        <authorList>
            <consortium name="The MGC Project Team"/>
        </authorList>
    </citation>
    <scope>NUCLEOTIDE SEQUENCE [LARGE SCALE MRNA]</scope>
    <source>
        <tissue>Pancreas</tissue>
    </source>
</reference>
<reference key="9">
    <citation type="journal article" date="2015" name="Cell. Microbiol.">
        <title>PERP, a host tetraspanning membrane protein, is required for Salmonella-induced inflammation.</title>
        <authorList>
            <person name="Hallstrom K.N."/>
            <person name="Srikanth C.V."/>
            <person name="Agbor T.A."/>
            <person name="Dumont C.M."/>
            <person name="Peters K.N."/>
            <person name="Paraoan L."/>
            <person name="Casanova J.E."/>
            <person name="Boll E.J."/>
            <person name="McCormick B.A."/>
        </authorList>
    </citation>
    <scope>FUNCTION</scope>
    <scope>INTERACTION WITH S.TYPHIMURIUM SIPA AND SCTB1</scope>
    <scope>SUBCELLULAR LOCATION</scope>
    <scope>TISSUE SPECIFICITY</scope>
</reference>
<reference key="10">
    <citation type="journal article" date="2016" name="Gut Microbes">
        <title>The type three secreted effector SipC regulates the trafficking of PERP during Salmonella infection.</title>
        <authorList>
            <person name="Hallstrom K.N."/>
            <person name="McCormick B.A."/>
        </authorList>
    </citation>
    <scope>TISSUE SPECIFICITY</scope>
</reference>
<reference key="11">
    <citation type="journal article" date="2019" name="J. Invest. Dermatol.">
        <title>Mutations in PERP Cause Dominant and Recessive Keratoderma.</title>
        <authorList>
            <person name="Duchatelet S."/>
            <person name="Boyden L.M."/>
            <person name="Ishida-Yamamoto A."/>
            <person name="Zhou J."/>
            <person name="Guibbal L."/>
            <person name="Hu R."/>
            <person name="Lim Y.H."/>
            <person name="Bole-Feysot C."/>
            <person name="Nitschke P."/>
            <person name="Santos-Simarro F."/>
            <person name="de Lucas R."/>
            <person name="Milstone L.M."/>
            <person name="Gildenstern V."/>
            <person name="Helfrich Y.R."/>
            <person name="Attardi L.D."/>
            <person name="Lifton R.P."/>
            <person name="Choate K.A."/>
            <person name="Hovnanian A."/>
        </authorList>
    </citation>
    <scope>INVOLVEMENT IN EKVP7</scope>
    <scope>INVOLVEMENT IN OLMS2</scope>
    <scope>VARIANTS OLMS2 151-TRP--ALA-193 DEL AND 153-TYR--ALA-193 DEL</scope>
    <scope>CHARACTERIZATION OF VARIANT OLMS2 153-TYR--ALA-193 DEL</scope>
</reference>
<reference key="12">
    <citation type="journal article" date="2020" name="Br. J. Dermatol.">
        <title>Olmsted syndrome with alopecia universalis caused by heterozygous mutation in PERP.</title>
        <authorList>
            <person name="Dai S."/>
            <person name="Sun Z."/>
            <person name="Lee M."/>
            <person name="Wang H."/>
            <person name="Yang Y."/>
            <person name="Lin Z."/>
        </authorList>
    </citation>
    <scope>INVOLVEMENT IN OLMS2</scope>
    <scope>VARIANT OLMS2 153-TYR--ALA-193 DEL</scope>
</reference>
<reference key="13">
    <citation type="journal article" date="2020" name="Clin. Genet.">
        <title>Confirming the recessive inheritance of PERP-related erythrokeratoderma.</title>
        <authorList>
            <person name="Patel N."/>
            <person name="Alkeraye S."/>
            <person name="Alobeid E."/>
            <person name="Alshidi T."/>
            <person name="Helaby R."/>
            <person name="Abdulwahab F."/>
            <person name="Shamseldin H.E."/>
            <person name="Alkuraya F.S."/>
        </authorList>
    </citation>
    <scope>VARIANT EKVP7 ARG-156</scope>
    <scope>SUBCELLULAR LOCATION</scope>
</reference>
<name>PERP_HUMAN</name>
<comment type="function">
    <text evidence="1 2 7">Component of intercellular desmosome junctions (By similarity). Plays a role in stratified epithelial integrity and cell-cell adhesion by promoting desmosome assembly (By similarity). Thereby plays a role in barrier function of the skin against infection (By similarity). Plays a role in mammary epithelial tissue homeostasis and remodeling during and after pregnancy, potentially via its involvement in desmosome cell-cell junctions (By similarity). Required for tooth enamel development via facilitating desmosome-mediated ameloblast adhesion to the stratum intermedium during the transitional stage of amelogenesis (By similarity). May also play a role in downstream transcriptional regulation of other genes involved in amelogenesis such as AMBN, ENAM, MMP20 and KLK4 (By similarity). Plays a role as an effector in the TP53-dependent apoptotic pathway (By similarity). Positively regulates apoptosis in T-helper 17 (Th17) cell populations via caspase-dependent signaling (By similarity). Promotes neutrophil transepithelial migration in response to chemoattractants such as hepoxilin A3 (HXA3), N-Formylmethionyl-leucyl-phenylalanine (fMLP) and CXCL8/IL-8 (PubMed:25486861). Required for neutrophil transepithelial migration in response to S.typhimurium infection (PubMed:25486861). May act as a positive regulator of endothelial cell apoptosis in response to blood flow-derived shear stress (By similarity).</text>
</comment>
<comment type="subunit">
    <text evidence="7">(Microbial infection) Interacts with S.typhimurium sipA and sctB1/sipC.</text>
</comment>
<comment type="interaction">
    <interactant intactId="EBI-17183069">
        <id>Q96FX8</id>
    </interactant>
    <interactant intactId="EBI-348517">
        <id>O95870</id>
        <label>ABHD16A</label>
    </interactant>
    <organismsDiffer>false</organismsDiffer>
    <experiments>3</experiments>
</comment>
<comment type="interaction">
    <interactant intactId="EBI-17183069">
        <id>Q96FX8</id>
    </interactant>
    <interactant intactId="EBI-744302">
        <id>P14136</id>
        <label>GFAP</label>
    </interactant>
    <organismsDiffer>false</organismsDiffer>
    <experiments>3</experiments>
</comment>
<comment type="interaction">
    <interactant intactId="EBI-17183069">
        <id>Q96FX8</id>
    </interactant>
    <interactant intactId="EBI-747754">
        <id>P28799</id>
        <label>GRN</label>
    </interactant>
    <organismsDiffer>false</organismsDiffer>
    <experiments>3</experiments>
</comment>
<comment type="interaction">
    <interactant intactId="EBI-17183069">
        <id>Q96FX8</id>
    </interactant>
    <interactant intactId="EBI-352682">
        <id>P04792</id>
        <label>HSPB1</label>
    </interactant>
    <organismsDiffer>false</organismsDiffer>
    <experiments>3</experiments>
</comment>
<comment type="interaction">
    <interactant intactId="EBI-17183069">
        <id>Q96FX8</id>
    </interactant>
    <interactant intactId="EBI-1055254">
        <id>Q8WXH2</id>
        <label>JPH3</label>
    </interactant>
    <organismsDiffer>false</organismsDiffer>
    <experiments>3</experiments>
</comment>
<comment type="interaction">
    <interactant intactId="EBI-17183069">
        <id>Q96FX8</id>
    </interactant>
    <interactant intactId="EBI-10975473">
        <id>O60333-2</id>
        <label>KIF1B</label>
    </interactant>
    <organismsDiffer>false</organismsDiffer>
    <experiments>3</experiments>
</comment>
<comment type="interaction">
    <interactant intactId="EBI-17183069">
        <id>Q96FX8</id>
    </interactant>
    <interactant intactId="EBI-3932027">
        <id>P21145</id>
        <label>MAL</label>
    </interactant>
    <organismsDiffer>false</organismsDiffer>
    <experiments>3</experiments>
</comment>
<comment type="interaction">
    <interactant intactId="EBI-17183069">
        <id>Q96FX8</id>
    </interactant>
    <interactant intactId="EBI-720609">
        <id>O76024</id>
        <label>WFS1</label>
    </interactant>
    <organismsDiffer>false</organismsDiffer>
    <experiments>3</experiments>
</comment>
<comment type="subcellular location">
    <subcellularLocation>
        <location evidence="2">Cell junction</location>
        <location evidence="2">Desmosome</location>
    </subcellularLocation>
    <subcellularLocation>
        <location evidence="7 9 11">Cell membrane</location>
        <topology evidence="3">Multi-pass membrane protein</topology>
    </subcellularLocation>
    <subcellularLocation>
        <location evidence="7">Cytoplasm</location>
    </subcellularLocation>
    <text evidence="2 7 11">Associated with desmosomes (By similarity). Colocalizes with KRT14 in the cell membrane (PubMed:31898316). Clusters in a punctate pattern throughout the epithelial cytoplasm, in response to S.typhimurium infection (PubMed:25486861).</text>
</comment>
<comment type="tissue specificity">
    <text evidence="4 7 8">Expressed in skin, heart, placental, liver, pancreas, keratinocytes and dermal fibroblasts. May translocate to the intestinal apical epithelial cell surface via sipA and sctB1/sipC-promoted exocytic translocation following infection by S. Typhimurium (PubMed:25486861, PubMed:27078059).</text>
</comment>
<comment type="disease" evidence="9 11">
    <disease id="DI-06018">
        <name>Erythrokeratodermia variabilis et progressiva 7</name>
        <acronym>EKVP7</acronym>
        <description>A form of erythrokeratodermia variabilis et progressiva, a genodermatosis characterized by the coexistence of two independent skin lesions: transient erythema and hyperkeratosis that is usually localized but occasionally occurs in its generalized form. Clinical presentation varies significantly within a family and from one family to another. Palmoplantar keratoderma is present in around 50% of cases. EKVP7 is an autosomal recessive form characterized by palmoplantar keratoderma that extends to the dorsal surface of the hands and feet, as well as erythematous annular skin lesions. Pruritus, woolly hair, and dystrophic nails may also be present.</description>
        <dbReference type="MIM" id="619209"/>
    </disease>
    <text>The disease is caused by variants affecting the gene represented in this entry.</text>
</comment>
<comment type="disease" evidence="9 10">
    <disease id="DI-06019">
        <name>Olmsted syndrome 2</name>
        <acronym>OLMS2</acronym>
        <description>A form of Olmsted syndrome, a rare congenital disorder characterized by bilateral mutilating palmoplantar keratoderma and periorificial keratotic plaques with severe itching at all lesions. Diffuse alopecia, constriction of digits, and onychodystrophy have also been reported. Infections and squamous cell carcinomas can arise on the keratotic areas. The digital constriction may progress to autoamputation of fingers and toes. OLMS2 is an autosomal dominant form with onset in the first months of life or in early childhood.</description>
        <dbReference type="MIM" id="619208"/>
    </disease>
    <text>The disease is caused by variants affecting the gene represented in this entry.</text>
</comment>
<comment type="similarity">
    <text evidence="16">Belongs to the TMEM47 family.</text>
</comment>
<feature type="chain" id="PRO_0000226994" description="p53 apoptosis effector related to PMP-22">
    <location>
        <begin position="1"/>
        <end position="193"/>
    </location>
</feature>
<feature type="transmembrane region" description="Helical" evidence="3">
    <location>
        <begin position="12"/>
        <end position="32"/>
    </location>
</feature>
<feature type="transmembrane region" description="Helical" evidence="3">
    <location>
        <begin position="79"/>
        <end position="99"/>
    </location>
</feature>
<feature type="transmembrane region" description="Helical" evidence="3">
    <location>
        <begin position="110"/>
        <end position="130"/>
    </location>
</feature>
<feature type="transmembrane region" description="Helical" evidence="3">
    <location>
        <begin position="151"/>
        <end position="171"/>
    </location>
</feature>
<feature type="sequence variant" id="VAR_052341" description="In dbSNP:rs648802." evidence="4 6">
    <original>P</original>
    <variation>R</variation>
    <location>
        <position position="143"/>
    </location>
</feature>
<feature type="sequence variant" id="VAR_085248" description="In OLMS2." evidence="9">
    <location>
        <begin position="151"/>
        <end position="193"/>
    </location>
</feature>
<feature type="sequence variant" id="VAR_085249" description="In OLMS2; keratinocytes from patient show normal PERP membrane localization." evidence="9 10">
    <location>
        <begin position="153"/>
        <end position="193"/>
    </location>
</feature>
<feature type="sequence variant" id="VAR_085250" description="In EKVP7; patient cells show a change in the subcellular location pattern; does not associate with cell membrane; diffuse location into the cytoplasm; dbSNP:rs1775596006." evidence="11">
    <original>G</original>
    <variation>R</variation>
    <location>
        <position position="156"/>
    </location>
</feature>
<feature type="sequence variant" id="VAR_070891" description="In dbSNP:rs75183345." evidence="5 12">
    <original>P</original>
    <variation>L</variation>
    <location>
        <position position="174"/>
    </location>
</feature>
<feature type="sequence conflict" description="In Ref. 4; BAC05205." evidence="16" ref="4">
    <location>
        <begin position="4"/>
        <end position="7"/>
    </location>
</feature>
<feature type="sequence conflict" description="In Ref. 5; BAC11390." evidence="16" ref="5">
    <original>D</original>
    <variation>E</variation>
    <location>
        <position position="178"/>
    </location>
</feature>
<feature type="sequence conflict" description="In Ref. 2; AAO13162." evidence="16" ref="2">
    <original>A</original>
    <variation>G</variation>
    <location>
        <position position="193"/>
    </location>
</feature>
<dbReference type="EMBL" id="AJ251830">
    <property type="protein sequence ID" value="CAC17766.1"/>
    <property type="molecule type" value="mRNA"/>
</dbReference>
<dbReference type="EMBL" id="AY157578">
    <property type="protein sequence ID" value="AAO13162.1"/>
    <property type="molecule type" value="mRNA"/>
</dbReference>
<dbReference type="EMBL" id="AF317550">
    <property type="protein sequence ID" value="AAG35063.1"/>
    <property type="molecule type" value="mRNA"/>
</dbReference>
<dbReference type="EMBL" id="AK097958">
    <property type="protein sequence ID" value="BAC05205.1"/>
    <property type="molecule type" value="mRNA"/>
</dbReference>
<dbReference type="EMBL" id="AK074585">
    <property type="protein sequence ID" value="BAC11074.1"/>
    <property type="molecule type" value="mRNA"/>
</dbReference>
<dbReference type="EMBL" id="AK075082">
    <property type="protein sequence ID" value="BAC11390.1"/>
    <property type="molecule type" value="mRNA"/>
</dbReference>
<dbReference type="EMBL" id="AK314526">
    <property type="protein sequence ID" value="BAG37120.1"/>
    <property type="molecule type" value="mRNA"/>
</dbReference>
<dbReference type="EMBL" id="AL355362">
    <property type="status" value="NOT_ANNOTATED_CDS"/>
    <property type="molecule type" value="Genomic_DNA"/>
</dbReference>
<dbReference type="EMBL" id="AL023582">
    <property type="status" value="NOT_ANNOTATED_CDS"/>
    <property type="molecule type" value="Genomic_DNA"/>
</dbReference>
<dbReference type="EMBL" id="CH471051">
    <property type="protein sequence ID" value="EAW47920.1"/>
    <property type="molecule type" value="Genomic_DNA"/>
</dbReference>
<dbReference type="EMBL" id="CH471051">
    <property type="protein sequence ID" value="EAW47921.1"/>
    <property type="molecule type" value="Genomic_DNA"/>
</dbReference>
<dbReference type="EMBL" id="BC010163">
    <property type="protein sequence ID" value="AAH10163.1"/>
    <property type="molecule type" value="mRNA"/>
</dbReference>
<dbReference type="CCDS" id="CCDS5188.1"/>
<dbReference type="RefSeq" id="NP_071404.2">
    <property type="nucleotide sequence ID" value="NM_022121.4"/>
</dbReference>
<dbReference type="SMR" id="Q96FX8"/>
<dbReference type="BioGRID" id="122038">
    <property type="interactions" value="5"/>
</dbReference>
<dbReference type="FunCoup" id="Q96FX8">
    <property type="interactions" value="456"/>
</dbReference>
<dbReference type="IntAct" id="Q96FX8">
    <property type="interactions" value="8"/>
</dbReference>
<dbReference type="STRING" id="9606.ENSP00000397157"/>
<dbReference type="TCDB" id="8.A.16.4.3">
    <property type="family name" value="the ca(+) channel auxiliary subunit Gama1-Gama8 (ccaGama) family"/>
</dbReference>
<dbReference type="iPTMnet" id="Q96FX8"/>
<dbReference type="PhosphoSitePlus" id="Q96FX8"/>
<dbReference type="SwissPalm" id="Q96FX8"/>
<dbReference type="BioMuta" id="PERP"/>
<dbReference type="DMDM" id="74751865"/>
<dbReference type="jPOST" id="Q96FX8"/>
<dbReference type="MassIVE" id="Q96FX8"/>
<dbReference type="PaxDb" id="9606-ENSP00000397157"/>
<dbReference type="PeptideAtlas" id="Q96FX8"/>
<dbReference type="ProteomicsDB" id="76571"/>
<dbReference type="Pumba" id="Q96FX8"/>
<dbReference type="ABCD" id="Q96FX8">
    <property type="antibodies" value="15 sequenced antibodies"/>
</dbReference>
<dbReference type="Antibodypedia" id="19785">
    <property type="antibodies" value="229 antibodies from 34 providers"/>
</dbReference>
<dbReference type="DNASU" id="64065"/>
<dbReference type="Ensembl" id="ENST00000421351.4">
    <property type="protein sequence ID" value="ENSP00000397157.2"/>
    <property type="gene ID" value="ENSG00000112378.12"/>
</dbReference>
<dbReference type="GeneID" id="64065"/>
<dbReference type="KEGG" id="hsa:64065"/>
<dbReference type="MANE-Select" id="ENST00000421351.4">
    <property type="protein sequence ID" value="ENSP00000397157.2"/>
    <property type="RefSeq nucleotide sequence ID" value="NM_022121.5"/>
    <property type="RefSeq protein sequence ID" value="NP_071404.2"/>
</dbReference>
<dbReference type="UCSC" id="uc003qht.3">
    <property type="organism name" value="human"/>
</dbReference>
<dbReference type="AGR" id="HGNC:17637"/>
<dbReference type="CTD" id="64065"/>
<dbReference type="DisGeNET" id="64065"/>
<dbReference type="GeneCards" id="PERP"/>
<dbReference type="HGNC" id="HGNC:17637">
    <property type="gene designation" value="PERP"/>
</dbReference>
<dbReference type="HPA" id="ENSG00000112378">
    <property type="expression patterns" value="Tissue enhanced (esophagus, skin)"/>
</dbReference>
<dbReference type="MalaCards" id="PERP"/>
<dbReference type="MIM" id="609301">
    <property type="type" value="gene"/>
</dbReference>
<dbReference type="MIM" id="619208">
    <property type="type" value="phenotype"/>
</dbReference>
<dbReference type="MIM" id="619209">
    <property type="type" value="phenotype"/>
</dbReference>
<dbReference type="neXtProt" id="NX_Q96FX8"/>
<dbReference type="OpenTargets" id="ENSG00000112378"/>
<dbReference type="Orphanet" id="659">
    <property type="disease" value="Mutilating palmoplantar keratoderma with periorificial keratotic plaques"/>
</dbReference>
<dbReference type="PharmGKB" id="PA134944221"/>
<dbReference type="VEuPathDB" id="HostDB:ENSG00000112378"/>
<dbReference type="eggNOG" id="KOG4671">
    <property type="taxonomic scope" value="Eukaryota"/>
</dbReference>
<dbReference type="GeneTree" id="ENSGT00530000063484"/>
<dbReference type="HOGENOM" id="CLU_120054_0_0_1"/>
<dbReference type="InParanoid" id="Q96FX8"/>
<dbReference type="OMA" id="RCGLACW"/>
<dbReference type="OrthoDB" id="8868135at2759"/>
<dbReference type="PAN-GO" id="Q96FX8">
    <property type="GO annotations" value="2 GO annotations based on evolutionary models"/>
</dbReference>
<dbReference type="PhylomeDB" id="Q96FX8"/>
<dbReference type="TreeFam" id="TF312855"/>
<dbReference type="PathwayCommons" id="Q96FX8"/>
<dbReference type="Reactome" id="R-HSA-6803205">
    <property type="pathway name" value="TP53 regulates transcription of several additional cell death genes whose specific roles in p53-dependent apoptosis remain uncertain"/>
</dbReference>
<dbReference type="Reactome" id="R-HSA-6809371">
    <property type="pathway name" value="Formation of the cornified envelope"/>
</dbReference>
<dbReference type="SignaLink" id="Q96FX8"/>
<dbReference type="SIGNOR" id="Q96FX8"/>
<dbReference type="BioGRID-ORCS" id="64065">
    <property type="hits" value="36 hits in 1151 CRISPR screens"/>
</dbReference>
<dbReference type="ChiTaRS" id="PERP">
    <property type="organism name" value="human"/>
</dbReference>
<dbReference type="GeneWiki" id="PERP"/>
<dbReference type="GenomeRNAi" id="64065"/>
<dbReference type="Pharos" id="Q96FX8">
    <property type="development level" value="Tbio"/>
</dbReference>
<dbReference type="PRO" id="PR:Q96FX8"/>
<dbReference type="Proteomes" id="UP000005640">
    <property type="component" value="Chromosome 6"/>
</dbReference>
<dbReference type="RNAct" id="Q96FX8">
    <property type="molecule type" value="protein"/>
</dbReference>
<dbReference type="Bgee" id="ENSG00000112378">
    <property type="expression patterns" value="Expressed in penis and 198 other cell types or tissues"/>
</dbReference>
<dbReference type="GO" id="GO:0005911">
    <property type="term" value="C:cell-cell junction"/>
    <property type="evidence" value="ECO:0000318"/>
    <property type="project" value="GO_Central"/>
</dbReference>
<dbReference type="GO" id="GO:0030057">
    <property type="term" value="C:desmosome"/>
    <property type="evidence" value="ECO:0000250"/>
    <property type="project" value="UniProtKB"/>
</dbReference>
<dbReference type="GO" id="GO:0005794">
    <property type="term" value="C:Golgi apparatus"/>
    <property type="evidence" value="ECO:0007669"/>
    <property type="project" value="Ensembl"/>
</dbReference>
<dbReference type="GO" id="GO:0005739">
    <property type="term" value="C:mitochondrion"/>
    <property type="evidence" value="ECO:0007669"/>
    <property type="project" value="Ensembl"/>
</dbReference>
<dbReference type="GO" id="GO:0005886">
    <property type="term" value="C:plasma membrane"/>
    <property type="evidence" value="ECO:0000250"/>
    <property type="project" value="UniProtKB"/>
</dbReference>
<dbReference type="GO" id="GO:0097186">
    <property type="term" value="P:amelogenesis"/>
    <property type="evidence" value="ECO:0007669"/>
    <property type="project" value="Ensembl"/>
</dbReference>
<dbReference type="GO" id="GO:0098609">
    <property type="term" value="P:cell-cell adhesion"/>
    <property type="evidence" value="ECO:0000318"/>
    <property type="project" value="GO_Central"/>
</dbReference>
<dbReference type="GO" id="GO:0002934">
    <property type="term" value="P:desmosome organization"/>
    <property type="evidence" value="ECO:0007669"/>
    <property type="project" value="Ensembl"/>
</dbReference>
<dbReference type="GO" id="GO:0034113">
    <property type="term" value="P:heterotypic cell-cell adhesion"/>
    <property type="evidence" value="ECO:0007669"/>
    <property type="project" value="Ensembl"/>
</dbReference>
<dbReference type="GO" id="GO:0072332">
    <property type="term" value="P:intrinsic apoptotic signaling pathway by p53 class mediator"/>
    <property type="evidence" value="ECO:0007669"/>
    <property type="project" value="Ensembl"/>
</dbReference>
<dbReference type="GO" id="GO:0060603">
    <property type="term" value="P:mammary gland duct morphogenesis"/>
    <property type="evidence" value="ECO:0000250"/>
    <property type="project" value="UniProtKB"/>
</dbReference>
<dbReference type="GO" id="GO:0007219">
    <property type="term" value="P:Notch signaling pathway"/>
    <property type="evidence" value="ECO:0007669"/>
    <property type="project" value="Ensembl"/>
</dbReference>
<dbReference type="GO" id="GO:0090023">
    <property type="term" value="P:positive regulation of neutrophil chemotaxis"/>
    <property type="evidence" value="ECO:0000315"/>
    <property type="project" value="UniProtKB"/>
</dbReference>
<dbReference type="GO" id="GO:0045862">
    <property type="term" value="P:positive regulation of proteolysis"/>
    <property type="evidence" value="ECO:0000314"/>
    <property type="project" value="BHF-UCL"/>
</dbReference>
<dbReference type="GO" id="GO:0070234">
    <property type="term" value="P:positive regulation of T cell apoptotic process"/>
    <property type="evidence" value="ECO:0000250"/>
    <property type="project" value="UniProtKB"/>
</dbReference>
<dbReference type="GO" id="GO:0001894">
    <property type="term" value="P:tissue homeostasis"/>
    <property type="evidence" value="ECO:0000250"/>
    <property type="project" value="UniProtKB"/>
</dbReference>
<dbReference type="FunFam" id="1.20.140.150:FF:000014">
    <property type="entry name" value="p53 apoptosis effector related to PMP-22"/>
    <property type="match status" value="1"/>
</dbReference>
<dbReference type="Gene3D" id="1.20.140.150">
    <property type="match status" value="1"/>
</dbReference>
<dbReference type="InterPro" id="IPR015664">
    <property type="entry name" value="P53_induced"/>
</dbReference>
<dbReference type="InterPro" id="IPR004031">
    <property type="entry name" value="PMP22/EMP/MP20/Claudin"/>
</dbReference>
<dbReference type="PANTHER" id="PTHR14399:SF4">
    <property type="entry name" value="P53 APOPTOSIS EFFECTOR RELATED TO PMP-22"/>
    <property type="match status" value="1"/>
</dbReference>
<dbReference type="PANTHER" id="PTHR14399">
    <property type="entry name" value="P53-INDUCED PROTEIN RELATED"/>
    <property type="match status" value="1"/>
</dbReference>
<dbReference type="Pfam" id="PF00822">
    <property type="entry name" value="PMP22_Claudin"/>
    <property type="match status" value="1"/>
</dbReference>
<proteinExistence type="evidence at protein level"/>
<organism>
    <name type="scientific">Homo sapiens</name>
    <name type="common">Human</name>
    <dbReference type="NCBI Taxonomy" id="9606"/>
    <lineage>
        <taxon>Eukaryota</taxon>
        <taxon>Metazoa</taxon>
        <taxon>Chordata</taxon>
        <taxon>Craniata</taxon>
        <taxon>Vertebrata</taxon>
        <taxon>Euteleostomi</taxon>
        <taxon>Mammalia</taxon>
        <taxon>Eutheria</taxon>
        <taxon>Euarchontoglires</taxon>
        <taxon>Primates</taxon>
        <taxon>Haplorrhini</taxon>
        <taxon>Catarrhini</taxon>
        <taxon>Hominidae</taxon>
        <taxon>Homo</taxon>
    </lineage>
</organism>
<sequence length="193" mass="21386">MIRCGLACERCRWILPLLLLSAIAFDIIALAGRGWLQSSDHGQTSSLWWKCSQEGGGSGSYEEGCQSLMEYAWGRAAAAMLFCGFIILVICFILSFFALCGPQMLVFLRVIGGLLALAAVFQIISLVIYPVKYTQTFTLHANPAVTYIYNWAYGFGWAATIILIGCAFFFCCLPNYEDDLLGNAKPRYFYTSA</sequence>
<protein>
    <recommendedName>
        <fullName evidence="17">p53 apoptosis effector related to PMP-22</fullName>
    </recommendedName>
    <alternativeName>
        <fullName evidence="14">Keratinocyte-associated protein 1</fullName>
        <shortName evidence="14">KCP-1</shortName>
    </alternativeName>
    <alternativeName>
        <fullName evidence="15">P53-induced protein PIGPC1</fullName>
    </alternativeName>
    <alternativeName>
        <fullName evidence="13">Transmembrane protein THW</fullName>
    </alternativeName>
</protein>
<keyword id="KW-0053">Apoptosis</keyword>
<keyword id="KW-0130">Cell adhesion</keyword>
<keyword id="KW-0965">Cell junction</keyword>
<keyword id="KW-1003">Cell membrane</keyword>
<keyword id="KW-0963">Cytoplasm</keyword>
<keyword id="KW-0225">Disease variant</keyword>
<keyword id="KW-0472">Membrane</keyword>
<keyword id="KW-1007">Palmoplantar keratoderma</keyword>
<keyword id="KW-1267">Proteomics identification</keyword>
<keyword id="KW-1185">Reference proteome</keyword>
<keyword id="KW-0812">Transmembrane</keyword>
<keyword id="KW-1133">Transmembrane helix</keyword>
<evidence type="ECO:0000250" key="1">
    <source>
        <dbReference type="UniProtKB" id="E9QHT9"/>
    </source>
</evidence>
<evidence type="ECO:0000250" key="2">
    <source>
        <dbReference type="UniProtKB" id="Q9JK95"/>
    </source>
</evidence>
<evidence type="ECO:0000255" key="3"/>
<evidence type="ECO:0000269" key="4">
    <source>
    </source>
</evidence>
<evidence type="ECO:0000269" key="5">
    <source>
    </source>
</evidence>
<evidence type="ECO:0000269" key="6">
    <source>
    </source>
</evidence>
<evidence type="ECO:0000269" key="7">
    <source>
    </source>
</evidence>
<evidence type="ECO:0000269" key="8">
    <source>
    </source>
</evidence>
<evidence type="ECO:0000269" key="9">
    <source>
    </source>
</evidence>
<evidence type="ECO:0000269" key="10">
    <source>
    </source>
</evidence>
<evidence type="ECO:0000269" key="11">
    <source>
    </source>
</evidence>
<evidence type="ECO:0000269" key="12">
    <source ref="3"/>
</evidence>
<evidence type="ECO:0000303" key="13">
    <source>
    </source>
</evidence>
<evidence type="ECO:0000303" key="14">
    <source>
    </source>
</evidence>
<evidence type="ECO:0000303" key="15">
    <source ref="3"/>
</evidence>
<evidence type="ECO:0000305" key="16"/>
<evidence type="ECO:0000312" key="17">
    <source>
        <dbReference type="HGNC" id="HGNC:17637"/>
    </source>
</evidence>
<gene>
    <name evidence="17" type="primary">PERP</name>
    <name evidence="14" type="synonym">KCP1</name>
    <name evidence="14" type="synonym">KRTCAP1</name>
    <name evidence="15" type="synonym">PIGPC1</name>
    <name evidence="13" type="synonym">THW</name>
</gene>
<accession>Q96FX8</accession>
<accession>B2RB73</accession>
<accession>E1P590</accession>
<accession>Q8IWS3</accession>
<accession>Q8N1J6</accession>
<accession>Q8NC16</accession>
<accession>Q9H1C5</accession>
<accession>Q9H230</accession>